<accession>B7I5N9</accession>
<keyword id="KW-0002">3D-structure</keyword>
<keyword id="KW-0687">Ribonucleoprotein</keyword>
<keyword id="KW-0689">Ribosomal protein</keyword>
<keyword id="KW-0694">RNA-binding</keyword>
<keyword id="KW-0699">rRNA-binding</keyword>
<organism>
    <name type="scientific">Acinetobacter baumannii (strain AB0057)</name>
    <dbReference type="NCBI Taxonomy" id="480119"/>
    <lineage>
        <taxon>Bacteria</taxon>
        <taxon>Pseudomonadati</taxon>
        <taxon>Pseudomonadota</taxon>
        <taxon>Gammaproteobacteria</taxon>
        <taxon>Moraxellales</taxon>
        <taxon>Moraxellaceae</taxon>
        <taxon>Acinetobacter</taxon>
        <taxon>Acinetobacter calcoaceticus/baumannii complex</taxon>
    </lineage>
</organism>
<reference key="1">
    <citation type="journal article" date="2008" name="J. Bacteriol.">
        <title>Comparative genome sequence analysis of multidrug-resistant Acinetobacter baumannii.</title>
        <authorList>
            <person name="Adams M.D."/>
            <person name="Goglin K."/>
            <person name="Molyneaux N."/>
            <person name="Hujer K.M."/>
            <person name="Lavender H."/>
            <person name="Jamison J.J."/>
            <person name="MacDonald I.J."/>
            <person name="Martin K.M."/>
            <person name="Russo T."/>
            <person name="Campagnari A.A."/>
            <person name="Hujer A.M."/>
            <person name="Bonomo R.A."/>
            <person name="Gill S.R."/>
        </authorList>
    </citation>
    <scope>NUCLEOTIDE SEQUENCE [LARGE SCALE GENOMIC DNA]</scope>
    <source>
        <strain>AB0057</strain>
    </source>
</reference>
<gene>
    <name evidence="1" type="primary">rpsT</name>
    <name type="ordered locus">AB57_1842</name>
</gene>
<dbReference type="EMBL" id="CP001182">
    <property type="protein sequence ID" value="ACJ41221.1"/>
    <property type="molecule type" value="Genomic_DNA"/>
</dbReference>
<dbReference type="RefSeq" id="WP_000013652.1">
    <property type="nucleotide sequence ID" value="NC_011586.2"/>
</dbReference>
<dbReference type="PDB" id="6V39">
    <property type="method" value="EM"/>
    <property type="resolution" value="3.04 A"/>
    <property type="chains" value="t=1-88"/>
</dbReference>
<dbReference type="PDB" id="6V3A">
    <property type="method" value="EM"/>
    <property type="resolution" value="2.82 A"/>
    <property type="chains" value="t=1-88"/>
</dbReference>
<dbReference type="PDB" id="6V3B">
    <property type="method" value="EM"/>
    <property type="resolution" value="2.91 A"/>
    <property type="chains" value="t=1-88"/>
</dbReference>
<dbReference type="PDB" id="6V3E">
    <property type="method" value="EM"/>
    <property type="resolution" value="4.40 A"/>
    <property type="chains" value="t=1-88"/>
</dbReference>
<dbReference type="PDB" id="7M4U">
    <property type="method" value="EM"/>
    <property type="resolution" value="2.71 A"/>
    <property type="chains" value="t=1-88"/>
</dbReference>
<dbReference type="PDB" id="7M4W">
    <property type="method" value="EM"/>
    <property type="resolution" value="2.55 A"/>
    <property type="chains" value="t=1-88"/>
</dbReference>
<dbReference type="PDB" id="7M4X">
    <property type="method" value="EM"/>
    <property type="resolution" value="2.66 A"/>
    <property type="chains" value="t=1-88"/>
</dbReference>
<dbReference type="PDB" id="7M4Y">
    <property type="method" value="EM"/>
    <property type="resolution" value="2.50 A"/>
    <property type="chains" value="t=1-88"/>
</dbReference>
<dbReference type="PDB" id="7M4Z">
    <property type="method" value="EM"/>
    <property type="resolution" value="2.92 A"/>
    <property type="chains" value="t=1-88"/>
</dbReference>
<dbReference type="PDB" id="7RYF">
    <property type="method" value="EM"/>
    <property type="resolution" value="2.65 A"/>
    <property type="chains" value="t=1-88"/>
</dbReference>
<dbReference type="PDB" id="7RYG">
    <property type="method" value="EM"/>
    <property type="resolution" value="2.38 A"/>
    <property type="chains" value="t=1-88"/>
</dbReference>
<dbReference type="PDB" id="7RYH">
    <property type="method" value="EM"/>
    <property type="resolution" value="2.43 A"/>
    <property type="chains" value="t=1-88"/>
</dbReference>
<dbReference type="PDB" id="7UVV">
    <property type="method" value="EM"/>
    <property type="resolution" value="2.50 A"/>
    <property type="chains" value="t=1-88"/>
</dbReference>
<dbReference type="PDB" id="7UVW">
    <property type="method" value="EM"/>
    <property type="resolution" value="2.37 A"/>
    <property type="chains" value="t=1-88"/>
</dbReference>
<dbReference type="PDB" id="7UVX">
    <property type="method" value="EM"/>
    <property type="resolution" value="2.35 A"/>
    <property type="chains" value="t=1-88"/>
</dbReference>
<dbReference type="PDB" id="7UVY">
    <property type="method" value="EM"/>
    <property type="resolution" value="2.39 A"/>
    <property type="chains" value="t=1-88"/>
</dbReference>
<dbReference type="PDB" id="7UVZ">
    <property type="method" value="EM"/>
    <property type="resolution" value="2.21 A"/>
    <property type="chains" value="t=1-88"/>
</dbReference>
<dbReference type="PDB" id="7UW1">
    <property type="method" value="EM"/>
    <property type="resolution" value="2.21 A"/>
    <property type="chains" value="t=1-88"/>
</dbReference>
<dbReference type="PDBsum" id="6V39"/>
<dbReference type="PDBsum" id="6V3A"/>
<dbReference type="PDBsum" id="6V3B"/>
<dbReference type="PDBsum" id="6V3E"/>
<dbReference type="PDBsum" id="7M4U"/>
<dbReference type="PDBsum" id="7M4W"/>
<dbReference type="PDBsum" id="7M4X"/>
<dbReference type="PDBsum" id="7M4Y"/>
<dbReference type="PDBsum" id="7M4Z"/>
<dbReference type="PDBsum" id="7RYF"/>
<dbReference type="PDBsum" id="7RYG"/>
<dbReference type="PDBsum" id="7RYH"/>
<dbReference type="PDBsum" id="7UVV"/>
<dbReference type="PDBsum" id="7UVW"/>
<dbReference type="PDBsum" id="7UVX"/>
<dbReference type="PDBsum" id="7UVY"/>
<dbReference type="PDBsum" id="7UVZ"/>
<dbReference type="PDBsum" id="7UW1"/>
<dbReference type="EMDB" id="EMD-21030"/>
<dbReference type="EMDB" id="EMD-21031"/>
<dbReference type="EMDB" id="EMD-21032"/>
<dbReference type="EMDB" id="EMD-21034"/>
<dbReference type="EMDB" id="EMD-23666"/>
<dbReference type="EMDB" id="EMD-23668"/>
<dbReference type="EMDB" id="EMD-23669"/>
<dbReference type="EMDB" id="EMD-23670"/>
<dbReference type="EMDB" id="EMD-23671"/>
<dbReference type="EMDB" id="EMD-24738"/>
<dbReference type="EMDB" id="EMD-24739"/>
<dbReference type="EMDB" id="EMD-24740"/>
<dbReference type="EMDB" id="EMD-26817"/>
<dbReference type="EMDB" id="EMD-26818"/>
<dbReference type="EMDB" id="EMD-26819"/>
<dbReference type="EMDB" id="EMD-26820"/>
<dbReference type="EMDB" id="EMD-26821"/>
<dbReference type="EMDB" id="EMD-26822"/>
<dbReference type="SMR" id="B7I5N9"/>
<dbReference type="IntAct" id="B7I5N9">
    <property type="interactions" value="1"/>
</dbReference>
<dbReference type="GeneID" id="92893827"/>
<dbReference type="KEGG" id="abn:AB57_1842"/>
<dbReference type="HOGENOM" id="CLU_160655_4_0_6"/>
<dbReference type="Proteomes" id="UP000007094">
    <property type="component" value="Chromosome"/>
</dbReference>
<dbReference type="GO" id="GO:0005829">
    <property type="term" value="C:cytosol"/>
    <property type="evidence" value="ECO:0007669"/>
    <property type="project" value="TreeGrafter"/>
</dbReference>
<dbReference type="GO" id="GO:0015935">
    <property type="term" value="C:small ribosomal subunit"/>
    <property type="evidence" value="ECO:0007669"/>
    <property type="project" value="TreeGrafter"/>
</dbReference>
<dbReference type="GO" id="GO:0070181">
    <property type="term" value="F:small ribosomal subunit rRNA binding"/>
    <property type="evidence" value="ECO:0007669"/>
    <property type="project" value="TreeGrafter"/>
</dbReference>
<dbReference type="GO" id="GO:0003735">
    <property type="term" value="F:structural constituent of ribosome"/>
    <property type="evidence" value="ECO:0007669"/>
    <property type="project" value="InterPro"/>
</dbReference>
<dbReference type="GO" id="GO:0006412">
    <property type="term" value="P:translation"/>
    <property type="evidence" value="ECO:0007669"/>
    <property type="project" value="UniProtKB-UniRule"/>
</dbReference>
<dbReference type="FunFam" id="1.20.58.110:FF:000001">
    <property type="entry name" value="30S ribosomal protein S20"/>
    <property type="match status" value="1"/>
</dbReference>
<dbReference type="Gene3D" id="1.20.58.110">
    <property type="entry name" value="Ribosomal protein S20"/>
    <property type="match status" value="1"/>
</dbReference>
<dbReference type="HAMAP" id="MF_00500">
    <property type="entry name" value="Ribosomal_bS20"/>
    <property type="match status" value="1"/>
</dbReference>
<dbReference type="InterPro" id="IPR002583">
    <property type="entry name" value="Ribosomal_bS20"/>
</dbReference>
<dbReference type="InterPro" id="IPR036510">
    <property type="entry name" value="Ribosomal_bS20_sf"/>
</dbReference>
<dbReference type="NCBIfam" id="TIGR00029">
    <property type="entry name" value="S20"/>
    <property type="match status" value="1"/>
</dbReference>
<dbReference type="PANTHER" id="PTHR33398">
    <property type="entry name" value="30S RIBOSOMAL PROTEIN S20"/>
    <property type="match status" value="1"/>
</dbReference>
<dbReference type="PANTHER" id="PTHR33398:SF1">
    <property type="entry name" value="SMALL RIBOSOMAL SUBUNIT PROTEIN BS20C"/>
    <property type="match status" value="1"/>
</dbReference>
<dbReference type="Pfam" id="PF01649">
    <property type="entry name" value="Ribosomal_S20p"/>
    <property type="match status" value="1"/>
</dbReference>
<dbReference type="SUPFAM" id="SSF46992">
    <property type="entry name" value="Ribosomal protein S20"/>
    <property type="match status" value="1"/>
</dbReference>
<name>RS20_ACIB5</name>
<feature type="chain" id="PRO_1000126383" description="Small ribosomal subunit protein bS20">
    <location>
        <begin position="1"/>
        <end position="88"/>
    </location>
</feature>
<feature type="region of interest" description="Disordered" evidence="2">
    <location>
        <begin position="1"/>
        <end position="21"/>
    </location>
</feature>
<feature type="compositionally biased region" description="Basic residues" evidence="2">
    <location>
        <begin position="7"/>
        <end position="21"/>
    </location>
</feature>
<feature type="helix" evidence="4">
    <location>
        <begin position="5"/>
        <end position="41"/>
    </location>
</feature>
<feature type="helix" evidence="4">
    <location>
        <begin position="44"/>
        <end position="63"/>
    </location>
</feature>
<feature type="helix" evidence="4">
    <location>
        <begin position="69"/>
        <end position="86"/>
    </location>
</feature>
<protein>
    <recommendedName>
        <fullName evidence="1">Small ribosomal subunit protein bS20</fullName>
    </recommendedName>
    <alternativeName>
        <fullName evidence="3">30S ribosomal protein S20</fullName>
    </alternativeName>
</protein>
<comment type="function">
    <text evidence="1">Binds directly to 16S ribosomal RNA.</text>
</comment>
<comment type="similarity">
    <text evidence="1">Belongs to the bacterial ribosomal protein bS20 family.</text>
</comment>
<evidence type="ECO:0000255" key="1">
    <source>
        <dbReference type="HAMAP-Rule" id="MF_00500"/>
    </source>
</evidence>
<evidence type="ECO:0000256" key="2">
    <source>
        <dbReference type="SAM" id="MobiDB-lite"/>
    </source>
</evidence>
<evidence type="ECO:0000305" key="3"/>
<evidence type="ECO:0007829" key="4">
    <source>
        <dbReference type="PDB" id="7M4U"/>
    </source>
</evidence>
<proteinExistence type="evidence at protein level"/>
<sequence length="88" mass="9699">MANSAQAKKRARQNVKARKHNASLRSMVRTYIKRTLSAIAGGDYAVATEAYKKAVPVIDRMADKGIIHKNKAARHKSRLNAQVKALAN</sequence>